<name>RS3_MYCTO</name>
<dbReference type="EMBL" id="AE000516">
    <property type="protein sequence ID" value="AAK44965.1"/>
    <property type="molecule type" value="Genomic_DNA"/>
</dbReference>
<dbReference type="PIR" id="F70642">
    <property type="entry name" value="F70642"/>
</dbReference>
<dbReference type="RefSeq" id="WP_003403590.1">
    <property type="nucleotide sequence ID" value="NZ_KK341227.1"/>
</dbReference>
<dbReference type="SMR" id="P9WH36"/>
<dbReference type="GeneID" id="45424672"/>
<dbReference type="KEGG" id="mtc:MT0734"/>
<dbReference type="PATRIC" id="fig|83331.31.peg.784"/>
<dbReference type="HOGENOM" id="CLU_058591_0_0_11"/>
<dbReference type="Proteomes" id="UP000001020">
    <property type="component" value="Chromosome"/>
</dbReference>
<dbReference type="GO" id="GO:0022627">
    <property type="term" value="C:cytosolic small ribosomal subunit"/>
    <property type="evidence" value="ECO:0007669"/>
    <property type="project" value="TreeGrafter"/>
</dbReference>
<dbReference type="GO" id="GO:0003729">
    <property type="term" value="F:mRNA binding"/>
    <property type="evidence" value="ECO:0007669"/>
    <property type="project" value="UniProtKB-UniRule"/>
</dbReference>
<dbReference type="GO" id="GO:0019843">
    <property type="term" value="F:rRNA binding"/>
    <property type="evidence" value="ECO:0007669"/>
    <property type="project" value="UniProtKB-UniRule"/>
</dbReference>
<dbReference type="GO" id="GO:0003735">
    <property type="term" value="F:structural constituent of ribosome"/>
    <property type="evidence" value="ECO:0007669"/>
    <property type="project" value="InterPro"/>
</dbReference>
<dbReference type="GO" id="GO:0006412">
    <property type="term" value="P:translation"/>
    <property type="evidence" value="ECO:0007669"/>
    <property type="project" value="UniProtKB-UniRule"/>
</dbReference>
<dbReference type="CDD" id="cd02412">
    <property type="entry name" value="KH-II_30S_S3"/>
    <property type="match status" value="1"/>
</dbReference>
<dbReference type="FunFam" id="3.30.1140.32:FF:000002">
    <property type="entry name" value="30S ribosomal protein S3"/>
    <property type="match status" value="1"/>
</dbReference>
<dbReference type="FunFam" id="3.30.300.20:FF:000001">
    <property type="entry name" value="30S ribosomal protein S3"/>
    <property type="match status" value="1"/>
</dbReference>
<dbReference type="Gene3D" id="3.30.300.20">
    <property type="match status" value="1"/>
</dbReference>
<dbReference type="Gene3D" id="3.30.1140.32">
    <property type="entry name" value="Ribosomal protein S3, C-terminal domain"/>
    <property type="match status" value="1"/>
</dbReference>
<dbReference type="HAMAP" id="MF_01309_B">
    <property type="entry name" value="Ribosomal_uS3_B"/>
    <property type="match status" value="1"/>
</dbReference>
<dbReference type="InterPro" id="IPR004087">
    <property type="entry name" value="KH_dom"/>
</dbReference>
<dbReference type="InterPro" id="IPR015946">
    <property type="entry name" value="KH_dom-like_a/b"/>
</dbReference>
<dbReference type="InterPro" id="IPR004044">
    <property type="entry name" value="KH_dom_type_2"/>
</dbReference>
<dbReference type="InterPro" id="IPR009019">
    <property type="entry name" value="KH_sf_prok-type"/>
</dbReference>
<dbReference type="InterPro" id="IPR036419">
    <property type="entry name" value="Ribosomal_S3_C_sf"/>
</dbReference>
<dbReference type="InterPro" id="IPR005704">
    <property type="entry name" value="Ribosomal_uS3_bac-typ"/>
</dbReference>
<dbReference type="InterPro" id="IPR001351">
    <property type="entry name" value="Ribosomal_uS3_C"/>
</dbReference>
<dbReference type="InterPro" id="IPR018280">
    <property type="entry name" value="Ribosomal_uS3_CS"/>
</dbReference>
<dbReference type="NCBIfam" id="TIGR01009">
    <property type="entry name" value="rpsC_bact"/>
    <property type="match status" value="1"/>
</dbReference>
<dbReference type="PANTHER" id="PTHR11760">
    <property type="entry name" value="30S/40S RIBOSOMAL PROTEIN S3"/>
    <property type="match status" value="1"/>
</dbReference>
<dbReference type="PANTHER" id="PTHR11760:SF19">
    <property type="entry name" value="SMALL RIBOSOMAL SUBUNIT PROTEIN US3C"/>
    <property type="match status" value="1"/>
</dbReference>
<dbReference type="Pfam" id="PF07650">
    <property type="entry name" value="KH_2"/>
    <property type="match status" value="1"/>
</dbReference>
<dbReference type="Pfam" id="PF00189">
    <property type="entry name" value="Ribosomal_S3_C"/>
    <property type="match status" value="1"/>
</dbReference>
<dbReference type="SMART" id="SM00322">
    <property type="entry name" value="KH"/>
    <property type="match status" value="1"/>
</dbReference>
<dbReference type="SUPFAM" id="SSF54814">
    <property type="entry name" value="Prokaryotic type KH domain (KH-domain type II)"/>
    <property type="match status" value="1"/>
</dbReference>
<dbReference type="SUPFAM" id="SSF54821">
    <property type="entry name" value="Ribosomal protein S3 C-terminal domain"/>
    <property type="match status" value="1"/>
</dbReference>
<dbReference type="PROSITE" id="PS50823">
    <property type="entry name" value="KH_TYPE_2"/>
    <property type="match status" value="1"/>
</dbReference>
<dbReference type="PROSITE" id="PS00548">
    <property type="entry name" value="RIBOSOMAL_S3"/>
    <property type="match status" value="1"/>
</dbReference>
<accession>P9WH36</accession>
<accession>L0T4M3</accession>
<accession>O06048</accession>
<accession>P0A5X6</accession>
<accession>P95055</accession>
<organism>
    <name type="scientific">Mycobacterium tuberculosis (strain CDC 1551 / Oshkosh)</name>
    <dbReference type="NCBI Taxonomy" id="83331"/>
    <lineage>
        <taxon>Bacteria</taxon>
        <taxon>Bacillati</taxon>
        <taxon>Actinomycetota</taxon>
        <taxon>Actinomycetes</taxon>
        <taxon>Mycobacteriales</taxon>
        <taxon>Mycobacteriaceae</taxon>
        <taxon>Mycobacterium</taxon>
        <taxon>Mycobacterium tuberculosis complex</taxon>
    </lineage>
</organism>
<proteinExistence type="inferred from homology"/>
<sequence>MGQKINPHGFRLGITTDWKSRWYADKQYAEYVKEDVAIRRLLSSGLERAGIADVEIERTRDRVRVDIHTARPGIVIGRRGTEADRIRADLEKLTGKQVQLNILEVKNPESQAQLVAQGVAEQLSNRVAFRRAMRKAIQSAMRQPNVKGIRVQCSGRLGGAEMSRSEFYREGRVPLHTLRADIDYGLYEAKTTFGRIGVKVWIYKGDIVGGKRELAAAAPAGADRPRRERPSGTRPRRSGASGTTATGTDAGRAAGGEEAAPDAAAPVEAQSTES</sequence>
<comment type="function">
    <text evidence="2">Binds the lower part of the 30S subunit head. Binds mRNA in the 70S ribosome, positioning it for translation.</text>
</comment>
<comment type="subunit">
    <text evidence="2">Part of the 30S ribosomal subunit. Forms a tight complex with proteins S10 and S14.</text>
</comment>
<comment type="similarity">
    <text evidence="2">Belongs to the universal ribosomal protein uS3 family.</text>
</comment>
<evidence type="ECO:0000250" key="1"/>
<evidence type="ECO:0000255" key="2">
    <source>
        <dbReference type="HAMAP-Rule" id="MF_01309"/>
    </source>
</evidence>
<evidence type="ECO:0000256" key="3">
    <source>
        <dbReference type="SAM" id="MobiDB-lite"/>
    </source>
</evidence>
<evidence type="ECO:0000305" key="4"/>
<keyword id="KW-1185">Reference proteome</keyword>
<keyword id="KW-0687">Ribonucleoprotein</keyword>
<keyword id="KW-0689">Ribosomal protein</keyword>
<keyword id="KW-0694">RNA-binding</keyword>
<keyword id="KW-0699">rRNA-binding</keyword>
<protein>
    <recommendedName>
        <fullName evidence="2">Small ribosomal subunit protein uS3</fullName>
    </recommendedName>
    <alternativeName>
        <fullName evidence="4">30S ribosomal protein S3</fullName>
    </alternativeName>
</protein>
<reference key="1">
    <citation type="journal article" date="2002" name="J. Bacteriol.">
        <title>Whole-genome comparison of Mycobacterium tuberculosis clinical and laboratory strains.</title>
        <authorList>
            <person name="Fleischmann R.D."/>
            <person name="Alland D."/>
            <person name="Eisen J.A."/>
            <person name="Carpenter L."/>
            <person name="White O."/>
            <person name="Peterson J.D."/>
            <person name="DeBoy R.T."/>
            <person name="Dodson R.J."/>
            <person name="Gwinn M.L."/>
            <person name="Haft D.H."/>
            <person name="Hickey E.K."/>
            <person name="Kolonay J.F."/>
            <person name="Nelson W.C."/>
            <person name="Umayam L.A."/>
            <person name="Ermolaeva M.D."/>
            <person name="Salzberg S.L."/>
            <person name="Delcher A."/>
            <person name="Utterback T.R."/>
            <person name="Weidman J.F."/>
            <person name="Khouri H.M."/>
            <person name="Gill J."/>
            <person name="Mikula A."/>
            <person name="Bishai W."/>
            <person name="Jacobs W.R. Jr."/>
            <person name="Venter J.C."/>
            <person name="Fraser C.M."/>
        </authorList>
    </citation>
    <scope>NUCLEOTIDE SEQUENCE [LARGE SCALE GENOMIC DNA]</scope>
    <source>
        <strain>CDC 1551 / Oshkosh</strain>
    </source>
</reference>
<feature type="initiator methionine" description="Removed" evidence="1">
    <location>
        <position position="1"/>
    </location>
</feature>
<feature type="chain" id="PRO_0000428255" description="Small ribosomal subunit protein uS3">
    <location>
        <begin position="2"/>
        <end position="274"/>
    </location>
</feature>
<feature type="domain" description="KH type-2" evidence="2">
    <location>
        <begin position="38"/>
        <end position="106"/>
    </location>
</feature>
<feature type="region of interest" description="Disordered" evidence="3">
    <location>
        <begin position="215"/>
        <end position="274"/>
    </location>
</feature>
<feature type="compositionally biased region" description="Low complexity" evidence="3">
    <location>
        <begin position="238"/>
        <end position="266"/>
    </location>
</feature>
<gene>
    <name evidence="2" type="primary">rpsC</name>
    <name type="ordered locus">MT0734</name>
</gene>